<organism>
    <name type="scientific">Fusarium pseudograminearum (strain CS3096)</name>
    <name type="common">Wheat and barley crown-rot fungus</name>
    <dbReference type="NCBI Taxonomy" id="1028729"/>
    <lineage>
        <taxon>Eukaryota</taxon>
        <taxon>Fungi</taxon>
        <taxon>Dikarya</taxon>
        <taxon>Ascomycota</taxon>
        <taxon>Pezizomycotina</taxon>
        <taxon>Sordariomycetes</taxon>
        <taxon>Hypocreomycetidae</taxon>
        <taxon>Hypocreales</taxon>
        <taxon>Nectriaceae</taxon>
        <taxon>Fusarium</taxon>
    </lineage>
</organism>
<comment type="function">
    <text evidence="5">Nonribosomal peptide synthetase; part of the gene cluster that mediates the biosynthesis of the lipopeptides W493 A and B (PubMed:25412204). W493 A and B consist of six amino acid residues D-allo-thr, L-Ala, D-Ala, L-Gln, D-Tyr, and L-Val/L-Ile linked to a 3-hydroxy-4-methyltetradecanoic acid polyketide chain (PubMed:25412204). The biosynthesis starts with formation of the linear polyketide chain by the highly reducing polyketide synthase PKS40 (PubMed:25412204). The gene cluster contains a putative acyl-CoA ligase (FPSE_09184) for formation of a CoA thioester polyketide. The thiol bond could be hydrolyzed by the putative thioesterase (FPSE_09186) and then accepted by the first T domain in module 1 of NRPS32 (PubMed:25412204). The second T domain is responsible for accepting a threonine, which is adenylated by the A domain and epimerized to the D-allo-threonine formed by the E domain. The five successive modules incorporate Ala, Ala, Gln, Tyr, and Val/Ile into the final product, which is released by cyclization (PubMed:25412204).</text>
</comment>
<comment type="pathway">
    <text evidence="8">Secondary metabolite biosynthesis.</text>
</comment>
<comment type="domain">
    <text evidence="1 8">NRP synthetases are composed of discrete domains (adenylation (A), thiolation (T) or peptidyl carrier protein (PCP) and condensation (C) domains) which when grouped together are referred to as a single module. Each module is responsible for the recognition (via the A domain) and incorporation of a single amino acid into the growing peptide product. Thus, an NRP synthetase is generally composed of one or more modules and can terminate in a thioesterase domain (TE) that releases the newly synthesized peptide from the enzyme. Occasionally, epimerase (E) domains (responsible for L- to D-amino acid conversion) are present within the NRP synthetase (By similarity). NRPS32 has the following architecture: T-C-A-T-E-C-A-T-E-C-A-T-C-A-T-C-A-T-E-C-A-T-Cy. The last condensation domain (Cy) could be responsible for cyclization of the final product (Probable).</text>
</comment>
<comment type="similarity">
    <text evidence="7">Belongs to the NRP synthetase family.</text>
</comment>
<gene>
    <name evidence="6" type="primary">NRPS32</name>
    <name type="ORF">FPSE_09183</name>
</gene>
<proteinExistence type="inferred from homology"/>
<reference key="1">
    <citation type="journal article" date="2012" name="PLoS Pathog.">
        <title>Comparative pathogenomics reveals horizontally acquired novel virulence genes in fungi infecting cereal hosts.</title>
        <authorList>
            <person name="Gardiner D.M."/>
            <person name="McDonald M.C."/>
            <person name="Covarelli L."/>
            <person name="Solomon P.S."/>
            <person name="Rusu A.G."/>
            <person name="Marshall M."/>
            <person name="Kazan K."/>
            <person name="Chakraborty S."/>
            <person name="McDonald B.A."/>
            <person name="Manners J.M."/>
        </authorList>
    </citation>
    <scope>NUCLEOTIDE SEQUENCE [LARGE SCALE GENOMIC DNA]</scope>
    <source>
        <strain>CS3096</strain>
    </source>
</reference>
<reference key="2">
    <citation type="journal article" date="2014" name="J. Nat. Prod.">
        <title>Identification of the biosynthetic gene clusters for the lipopeptides fusaristatin A and W493 B in Fusarium graminearum and F. pseudograminearum.</title>
        <authorList>
            <person name="Soerensen J.L."/>
            <person name="Sondergaard T.E."/>
            <person name="Covarelli L."/>
            <person name="Fuertes P.R."/>
            <person name="Hansen F.T."/>
            <person name="Frandsen R.J."/>
            <person name="Saei W."/>
            <person name="Lukassen M.B."/>
            <person name="Wimmer R."/>
            <person name="Nielsen K.F."/>
            <person name="Gardiner D.M."/>
            <person name="Giese H."/>
        </authorList>
    </citation>
    <scope>IDENTIFICATION</scope>
    <scope>FUNCTION</scope>
    <scope>PATHWAY</scope>
</reference>
<dbReference type="EC" id="6.3.2.-" evidence="8"/>
<dbReference type="EMBL" id="CM003198">
    <property type="protein sequence ID" value="EKJ70673.1"/>
    <property type="molecule type" value="Genomic_DNA"/>
</dbReference>
<dbReference type="RefSeq" id="XP_009260575.1">
    <property type="nucleotide sequence ID" value="XM_009262300.1"/>
</dbReference>
<dbReference type="EnsemblFungi" id="EKJ70673">
    <property type="protein sequence ID" value="EKJ70673"/>
    <property type="gene ID" value="FPSE_09183"/>
</dbReference>
<dbReference type="GeneID" id="20367800"/>
<dbReference type="KEGG" id="fpu:FPSE_09183"/>
<dbReference type="eggNOG" id="KOG1176">
    <property type="taxonomic scope" value="Eukaryota"/>
</dbReference>
<dbReference type="eggNOG" id="KOG1178">
    <property type="taxonomic scope" value="Eukaryota"/>
</dbReference>
<dbReference type="HOGENOM" id="CLU_222660_0_0_1"/>
<dbReference type="OrthoDB" id="416786at2759"/>
<dbReference type="Proteomes" id="UP000007978">
    <property type="component" value="Chromosome 1"/>
</dbReference>
<dbReference type="GO" id="GO:0005737">
    <property type="term" value="C:cytoplasm"/>
    <property type="evidence" value="ECO:0007669"/>
    <property type="project" value="TreeGrafter"/>
</dbReference>
<dbReference type="GO" id="GO:0016853">
    <property type="term" value="F:isomerase activity"/>
    <property type="evidence" value="ECO:0007669"/>
    <property type="project" value="UniProtKB-KW"/>
</dbReference>
<dbReference type="GO" id="GO:0016874">
    <property type="term" value="F:ligase activity"/>
    <property type="evidence" value="ECO:0007669"/>
    <property type="project" value="UniProtKB-KW"/>
</dbReference>
<dbReference type="GO" id="GO:0031177">
    <property type="term" value="F:phosphopantetheine binding"/>
    <property type="evidence" value="ECO:0007669"/>
    <property type="project" value="InterPro"/>
</dbReference>
<dbReference type="GO" id="GO:0043041">
    <property type="term" value="P:amino acid activation for nonribosomal peptide biosynthetic process"/>
    <property type="evidence" value="ECO:0007669"/>
    <property type="project" value="TreeGrafter"/>
</dbReference>
<dbReference type="GO" id="GO:0044550">
    <property type="term" value="P:secondary metabolite biosynthetic process"/>
    <property type="evidence" value="ECO:0007669"/>
    <property type="project" value="TreeGrafter"/>
</dbReference>
<dbReference type="CDD" id="cd05918">
    <property type="entry name" value="A_NRPS_SidN3_like"/>
    <property type="match status" value="6"/>
</dbReference>
<dbReference type="CDD" id="cd19542">
    <property type="entry name" value="CT_NRPS-like"/>
    <property type="match status" value="5"/>
</dbReference>
<dbReference type="CDD" id="cd19534">
    <property type="entry name" value="E_NRPS"/>
    <property type="match status" value="3"/>
</dbReference>
<dbReference type="CDD" id="cd19545">
    <property type="entry name" value="FUM14_C_NRPS-like"/>
    <property type="match status" value="2"/>
</dbReference>
<dbReference type="FunFam" id="3.30.559.10:FF:000016">
    <property type="entry name" value="Nonribosomal peptide synthase Pes1"/>
    <property type="match status" value="2"/>
</dbReference>
<dbReference type="FunFam" id="3.30.559.30:FF:000002">
    <property type="entry name" value="Nonribosomal peptide synthase Pes1"/>
    <property type="match status" value="3"/>
</dbReference>
<dbReference type="FunFam" id="3.30.300.30:FF:000015">
    <property type="entry name" value="Nonribosomal peptide synthase SidD"/>
    <property type="match status" value="6"/>
</dbReference>
<dbReference type="FunFam" id="3.30.559.30:FF:000003">
    <property type="entry name" value="Nonribosomal peptide synthase SidD"/>
    <property type="match status" value="1"/>
</dbReference>
<dbReference type="FunFam" id="1.10.1200.10:FF:000005">
    <property type="entry name" value="Nonribosomal peptide synthetase 1"/>
    <property type="match status" value="3"/>
</dbReference>
<dbReference type="FunFam" id="3.40.50.12780:FF:000014">
    <property type="entry name" value="Nonribosomal peptide synthetase 1"/>
    <property type="match status" value="3"/>
</dbReference>
<dbReference type="Gene3D" id="3.30.300.30">
    <property type="match status" value="6"/>
</dbReference>
<dbReference type="Gene3D" id="3.40.50.980">
    <property type="match status" value="2"/>
</dbReference>
<dbReference type="Gene3D" id="1.10.1200.10">
    <property type="entry name" value="ACP-like"/>
    <property type="match status" value="7"/>
</dbReference>
<dbReference type="Gene3D" id="3.30.559.10">
    <property type="entry name" value="Chloramphenicol acetyltransferase-like domain"/>
    <property type="match status" value="11"/>
</dbReference>
<dbReference type="Gene3D" id="2.30.38.10">
    <property type="entry name" value="Luciferase, Domain 3"/>
    <property type="match status" value="1"/>
</dbReference>
<dbReference type="Gene3D" id="3.40.50.12780">
    <property type="entry name" value="N-terminal domain of ligase-like"/>
    <property type="match status" value="5"/>
</dbReference>
<dbReference type="Gene3D" id="3.30.559.30">
    <property type="entry name" value="Nonribosomal peptide synthetase, condensation domain"/>
    <property type="match status" value="10"/>
</dbReference>
<dbReference type="InterPro" id="IPR010071">
    <property type="entry name" value="AA_adenyl_dom"/>
</dbReference>
<dbReference type="InterPro" id="IPR036736">
    <property type="entry name" value="ACP-like_sf"/>
</dbReference>
<dbReference type="InterPro" id="IPR045851">
    <property type="entry name" value="AMP-bd_C_sf"/>
</dbReference>
<dbReference type="InterPro" id="IPR020845">
    <property type="entry name" value="AMP-binding_CS"/>
</dbReference>
<dbReference type="InterPro" id="IPR000873">
    <property type="entry name" value="AMP-dep_synth/lig_dom"/>
</dbReference>
<dbReference type="InterPro" id="IPR042099">
    <property type="entry name" value="ANL_N_sf"/>
</dbReference>
<dbReference type="InterPro" id="IPR023213">
    <property type="entry name" value="CAT-like_dom_sf"/>
</dbReference>
<dbReference type="InterPro" id="IPR001242">
    <property type="entry name" value="Condensatn"/>
</dbReference>
<dbReference type="InterPro" id="IPR020806">
    <property type="entry name" value="PKS_PP-bd"/>
</dbReference>
<dbReference type="InterPro" id="IPR009081">
    <property type="entry name" value="PP-bd_ACP"/>
</dbReference>
<dbReference type="InterPro" id="IPR006162">
    <property type="entry name" value="Ppantetheine_attach_site"/>
</dbReference>
<dbReference type="NCBIfam" id="TIGR01733">
    <property type="entry name" value="AA-adenyl-dom"/>
    <property type="match status" value="6"/>
</dbReference>
<dbReference type="NCBIfam" id="NF003417">
    <property type="entry name" value="PRK04813.1"/>
    <property type="match status" value="6"/>
</dbReference>
<dbReference type="PANTHER" id="PTHR45527">
    <property type="entry name" value="NONRIBOSOMAL PEPTIDE SYNTHETASE"/>
    <property type="match status" value="1"/>
</dbReference>
<dbReference type="PANTHER" id="PTHR45527:SF12">
    <property type="entry name" value="NONRIBOSOMAL PEPTIDE SYNTHETASE IVOA"/>
    <property type="match status" value="1"/>
</dbReference>
<dbReference type="Pfam" id="PF00501">
    <property type="entry name" value="AMP-binding"/>
    <property type="match status" value="6"/>
</dbReference>
<dbReference type="Pfam" id="PF00668">
    <property type="entry name" value="Condensation"/>
    <property type="match status" value="10"/>
</dbReference>
<dbReference type="Pfam" id="PF00550">
    <property type="entry name" value="PP-binding"/>
    <property type="match status" value="7"/>
</dbReference>
<dbReference type="SMART" id="SM00823">
    <property type="entry name" value="PKS_PP"/>
    <property type="match status" value="7"/>
</dbReference>
<dbReference type="SUPFAM" id="SSF56801">
    <property type="entry name" value="Acetyl-CoA synthetase-like"/>
    <property type="match status" value="6"/>
</dbReference>
<dbReference type="SUPFAM" id="SSF47336">
    <property type="entry name" value="ACP-like"/>
    <property type="match status" value="7"/>
</dbReference>
<dbReference type="SUPFAM" id="SSF52777">
    <property type="entry name" value="CoA-dependent acyltransferases"/>
    <property type="match status" value="21"/>
</dbReference>
<dbReference type="PROSITE" id="PS00455">
    <property type="entry name" value="AMP_BINDING"/>
    <property type="match status" value="5"/>
</dbReference>
<dbReference type="PROSITE" id="PS50075">
    <property type="entry name" value="CARRIER"/>
    <property type="match status" value="7"/>
</dbReference>
<dbReference type="PROSITE" id="PS00012">
    <property type="entry name" value="PHOSPHOPANTETHEINE"/>
    <property type="match status" value="1"/>
</dbReference>
<keyword id="KW-0413">Isomerase</keyword>
<keyword id="KW-0436">Ligase</keyword>
<keyword id="KW-0596">Phosphopantetheine</keyword>
<keyword id="KW-0597">Phosphoprotein</keyword>
<keyword id="KW-1185">Reference proteome</keyword>
<keyword id="KW-0677">Repeat</keyword>
<sequence>MENPNNGQAHFEPSKLVLGRVAADLFDTDVDSLDWGKSFIMLGGDSILAIDFIVRCRDAGILVDMRDLLTAGTLAQLAESIAQQNTGAGNGVNGHANGNGMNGNGLHNEATIRNGSDDLTTSAAAAGRRLRFATMEIPENTDASIISTAMERIVDRHSALRSNWSISSTGKWIITTASGSGLKSRQFFYGEFAEATEVTDAFEWLRKALLSDELFPSGCLVIPSDAPGCSHTIVLAADANVVDALSMGLVLRELRETINGTQLELSSDFQFSDWIARGCQGLEAQVERANTTKSNSITDTGALKLNGNTRDNIDFQLSRLATERLFAAQTHAALRTSPVDIVNAAVSQSLGPRYRDTENVLTIISAYSIREEKDIPLDSIGCYEVETELAATAPVPGETLVHLVRQMRDARAGFSADSRSSTAIYVDCTRLCHFEEGDYSPWLSDPTPDHSPYVSLAMIAGQVHVSLHFGIARPDDKLIADRLRSCLDEIVDELAKAPRMGTLHDFPLVRWSYSALDGLARDLQTHGLDFGDIESIGPSTSVQESFFVSQAINPGSYVSHATLRLLPTSANVPRRVETEKVVRAWSDIVERHAMLRTAFAESNDRPGKFDQLVFKPTALPPRVIVISSSAETSIVSPFTAGRFESPLRLCIYEINAEELRLELEISHALVDGHSAKILLHDIRASYLQSAYFSQSAPLPYTVFASRQQATLSEGEASAGITYWTSYLNEASESHLPLITTNPQLKDLETTRCSVSVPDGKLRAVCGELSITPANLFHVAWALALRRIILSDRITFSYIVSGRNSDADGVEATVGPFVNTLPFALALNPENSIADVLGSAKQDWQNGLQFQNIPIADLAAAKTRSLKRLGNTLLSIEREGSNTHPFTEGTYMSLDARTSAADFDLIANIRFNEQRINLSVEYWASRIAGPVAKAQMAAFEDAVSFLLEGVDLSVRDFPSHSPQDRAAFIRWNSTKPARLESCVHELVVEKMAEQPEALAVSSWDGELTYGELERASRRLAYHLVEKGVGPEVMVGMCMEKSKLGVVAMVATLLAGGGLVPLGVSHPLARIEGIVKDAASPLILVDRVHEERLAELGSYTELVAVDSFFDNASSTAIPSSGPFTSVGPDNVAWMIFTSGSTGKPKGVVLEHGSLATSILYHGRRLDIQPHDRLLQFAAFTFDAAIQEIITALAFGATTCIPSESDRMDRLSNYLAESKVTIATLTSTVAALVRPQETPTVRTIILMGEAVQAKVVDQWIDYATVINAYGPSECCIHSTCRPVTDSSASLNIGTAIAGATWVVNPTNINQLVPLGGQGELLLEGPLLARGYLNDSVKTAQAFVTDPAFVRELELGSNQHRMYRTGDLVQQNTDGTLTYLGRIDSQIKIRGQRVEIGEIEYHIGKQGGVHDAVVLYMRQGPLADRLVAAVNLGESSSVDRPQTSTVQVVSEDHMANARLRLREVQHGLSRQVMHYMVPSIWLPLSAMPMNQSGKTDRRALTDWIKSLSSDDIAALSNGGDADDVDDISATAVERELRQIWSEVLAVPLGSVTYSSSFFSLGGDSITAMQVVSASRSRGILITVRKVLDCQTIPELAAEVQATQNSDYAAVPEGAIALSPIQQMYFESIAADGLRADNEHCFNQGVLLHVTRQITLAELTRALDMAVAKHAMLRARFQYSQEQGWQQRIEREVTGSYRLCAHTAGDTEMSGIVAQSQSTLDIENGPVFAADLIEREDRQVLHLVAHHLVIDLVSWRILLRDLEEVIVNQKLPNPSSLSFPTWLGRQKESLSKVSNVLDTLPMIVPKTNWTYWGLTPGQETFGSRSSTQARCDIETTSLLTGGANSPLKTEPVEILLAGLLLSFQQVFADRPVPTVFTEGHGREAPDDGTDLSETIGWFTTMSPIYVSFTEASSNGAIDVLRQVKDQRRRIPGRGVPYFGSRFLTAQGKEQFAGHGPAEIMFNYTGRFQQLERDDALFHFDRDNNSSTMARAGDLVKLFAALDVAITIEAGKLCITVHYSNQSRCQEGIRRWVEVYGQTVKSLVNALNTVEPMATATDFPLARLSDSDMETIEGQYLPMIGLTSSAEIEDILPCSPIQQGILLTQLQSPSTYCIYQTCRIVPSGDAPVSADRLIAAWREVVSRHSILRTVLLEPLQGQENFIQVVLRHPEIGIIKKDGITDGVTAAEWLASRPSLDVSILGRPPHLLTVLTTVSGEVYCRFDISHALVDASSVTLIMRDLMDAYDEEKSQSAVSGSKYSTYVAFLQGRDSQDDLQYWTSLLQDAEPCLLPPNDPTHDAGDQPTIKKVSTRIDDIGKLHQFRDKYGVSVASIFQLSWALVLAMQTCSRNVSFGNLSSGRDVPISGVQELVGPMINMLVCHLDLNWGEGVSEAARKLQSQSTEAFEHQRTSLAAIQHGLGLSRNQPLFNSTLSYKRQASTSSGRASSITLEGLTWEDPTEYDVHINIEASSTSIDINMQYSTAAFSETTTKKLVDSLVHAVFAVCGGGDRALGQLRLLLPAEEAKLCEWNSVIPPRVERCVHELVLDRMVSQPEALAVSAWDGDLTYAELNHSSYQLAHHLVAERGIGPEVMVGLCMDKSKWAIVAMIAVLRAGGTLVPLGVQEPFSRIEMITGETGTPLVLVDRHHEQRVAGLDTQLFTVDYFFDAVSPISMLPPFAELSATRPDHAAWVIFTSGSTGRPKGVVLEHGSVATSILAHGPAIGIQIQDRVSQFAAYTFDVSIAEIMTTLTFGACVCVPSEDDRTNRLTQFLSESEVSIATLTSTVAALVQPDKTPKIRTLVLTGEAVQPKVVDQWMHRATVINAYGPAESSIWTTGKVIENALDATNIGTPLAGAFWVVNPDSVGQLVHIGELLIESPLLARGYLNDPVKTAASFITNLELLKNLGLGIGSRRMYRTGDLVRQNQDGTITYLGRRDTQVKIRGMQDAVVLYMNQGALAGRLIAFIVSSDTLAASHDQSKPQSSASIQRVHEEQNETADIWLKDVQQNLSQLVMHYMMPSVWIRLLAIPINASGKTDRLGLFRWVESLSAEDTAALTDAGAIEGEDIDESSATPIERELRQIWSEVLDVPISRVTYSTNFFSLGGDSITAMQVVSACRARGILVTVRKVLDCQTIPELAANSQTGREDAAHLARIPEGVFGLSPIQQMFFDEIAGDGLRADMDYRFNQAVSLYTTQRIEKTDLIWAINALVSKHAMLRARFRYTQDNAWQQWIEKDITGSYRFQDHTVADVELMQNLIEKSQATLDLEHGPVFAIDFIERQDRQGRQVLHLVAHHLVIDLVSWRILIRDLEELLVHHKLPNPTSLSFPVWLERQQDSLNRLVTETEEGADKSLEETLPVVVPNANWGYWGLVPGNDIYASLSTIEVQCGSATTSLLSGNANNALKTEPVDILLAALISSFQDVFADRSMPAVFTEGHGRETEEEEIDLSDTVSWFTTMVPVHVPQGAAKNAIEVLRKVKDQRRRLPGKGLPYFSSRYLTSHGREKFASHGPAEIIFNYLGRFQQLERDDALFHIEEDDTSASSQFGPLVKLFSVLDVSAGVEAGQLSIKVRFSRESLHQSAIKQWVKLYGDTVKTLVEELTMVPLTLTATDFPLARLSDSDWELIEGQYLKTEMGLSSTKEVEDILPCSAIQQGILLTQLQSPSTYCIHQTCRILPTDHTRPVSIQRLVVAWHQVVARHSILRSVLVEPLPAQESFLQIVLREPQIDVQITDGEDIRDEEAVEWLASQSTLDITKLSRPPHRLIILKTNTDNVYCRFDVSHALVDASSVALILRDLIAGYEGELGSSGGSNYSDYVAFLENRQQHNDLQYWKSLLADAEPCLLPLQQPVHEASQAHLGHVIDQLDDITMVHQFRDRHNVSIASICQLSWALVLANWTGSRNISFGNLSSGRDVPIPGVQELVGPMINMLVCNLFLDWDASTTIGGLARKLQSQSTESFEHQRASLASIQHELGFSKDQPLFNSTVSYRRQVSPSSDSKPAAIRLEAVISVDPTEYDVHVNIDASSTSLEFNLQYSTAVLSKAAATRLAESLVQAVRIVAQNVDRPLRELTSSLLPVGDKLQLQEWNSAVALPVQRCVHELVSDRIYTLPEALAISSWDGDMTYDQLGDTSRRLASYLVEQGVGPKTMVGLCLDKSKWAIVGMLAVLFAGGAVVPLGVQHPVSRIRSIVEDTNAPIILVDDIHEKRLATMTAHTQLLSVESFFRASQPVSLQSGKSTVRFEDPAWIIYTSGSSGVPKGVVLQHDALATSILAHGPVIGVKPFDRLSQFAAYTFDVSIAEIMTALSFGACVCVPSEQDRMERLPSFLKDANITIATLTSTVAALIQEDIPTIRTMVLTGEAVQSKVVDRWVQQATVINAYGPSESSIWASCNIVKSGTDALNIGKPLAGAFWVANPDNVGQLVVRGAPGELLIEGPLLAREYLNDPEKTSTAFVSDPKFMQELGLIPGRRLYRTGDLVQQNEDATLTYLGRIDSQIKIRGQRVEVAEIESQIVRLLPGAREAVVDLVRPEGEVHDGPLILVAVIEHSDASPSLDGEVFSLDGITQIPDNALQALGKLDNDLGSVLPPYMVPAAFLLVSKLPINASGKLDRRVVRQKLQSTSRDTIVRFSGSRDSIKAAPTTDLERKLQILYSTALRLVPEAVGLDDSFFKLGGDSVAAMKLTAVARAQNVSVSVADIFRWPRLADLSRVVEEKCSRDIGPLDKDPAPFSLWPELTETRTEIQTDDHNDKTRQARLLENIATRCNTSADQIEDVYPCSPMQAGLMAITAQRPEAYVIQRVFKLHDDLSTQQLKDAWTRLTGKLSVLRTRIIPSASAQADALQVVIQEAPVWQDCRSLEVYLATDRATPITYGRALSRTAVVDDPAGRYFIWTVHHSIYDGWSVARTMEMLTQLLSGQSTFSPAPVSRFINYLVQQDKDQIANFWNGHFEGANWVRYPAIASPQYRAKPRDTLQSQMHVNLETGGPATMSTLLRAAWALLVATNTGANDAAINVVLSGRMAPIDAVMDVISPLVTTVPFYVSASKQQSVRVFLETIHRRATEMIPYEHTGLQNIRALVPGLGSEFDPGHTFVVQPAGESESADLPMFKMDVERDATSFDAFDAYALTVECTVGGQNPGDVTIEVRYDRAVLAVDTVQHLIVQLAHIVQQLAQNAATDKPLSELQLLTDEDCDQLREWNSVVPPRLERCLHDLILETMTSYPTAPAISSWDGEMTYSELNDASQYLAYHLVDQGIGPEVMVGLCMDKSRWAVVAILAILRAGGVVVPLGIQQPLLRIEGIIQDTSCPLILVDRSQEHRLASLSDRASLFSVSSFFDAVPTPLAKSHNLSTKALPSVKPDHSAYVIFTSGSTGVPKGIILEHGALATSIIAHGTEFGMDIKNCDRVLQFAAYTFDVAIQDIIATLSFGACLCIPSEHDRMNRLVPYISEAKVTFAILTPTVAALIQPQDVPSIRTLILGGEALPAKVVDQWIGHANIINGYGPSECSIHSTCHKVQHSSEASIIGRGITAKTWVIDSSNSDQLVPIGAIGELIIEGPLLARGYLNDPLMTANSFITDPAFVQQLGFSPNRRMYRTGDLVQQNMDGSLVYLGRRDTQVKIRGQRVEVGEIESHILDLLPNAREAIVDVIQAAAEDQDVSPMLVAVIETDVSDTEVLASDTQMELYSPSQITQKMREGLDGLDTDLGLVLPAYMVPTVYLLASKLPLNASGKLDRRAVRDQLMLLPRHVLSSFSGLANSKQMPTTPMEQKLQTLYTSVLALKPEAVGISDSFFRLGGDSVAAMKLTAAAHAQGIPLTVADIFQWPRLADLAEAMEEKGGYGSSSAGQKDPEPFSLWPELQTGATEKSRLLADVAVQCGVSIDKIEDVYPCSPLQAGLMTITAQRPEAYVVQRVFKLQGGISTQTLKAAWTQLITDLPILRTRIIPSVQATALQVVLRETPIWQAGISLEDYLTADRAIPMIYGGALSRTAILEDGSHRHFIWTVHHSIYDGWSMAKTMEMLEGLLSGSTLSHPVSVPVSRFIGYLTQKDKDQTAMFWQKHLEGANWTRYPELPSQQHIINPRVTSHRRLRIPKIAGSTTFIVLRAAWALLVASKTGADEAVINVVLSGRAAPVKNLLHLVAPTITTVPFHVSTSTSQSIRDFLANIQGQATDMIPHEHTGLQNIRRMVSSLGPDFDPGHIFVVQPAAEMESTVTNSHLQIEREASSMDAFHAQALTIECTVGHDTRDVEVELRFDDAVIAADDVEQLLDQFNHLVQQLAENADKKLPLDRLQLLSPGQMAQICRWNSSIPSRVDRCIHELVMDQMTTRPAATAVTACDGDLTYRQLDDLSFQLALHLIETGIGPEVIVGVCMSKSKWAVVAMLAVLRAGGVVVPLGTRQPLGRIETIITDTAAPLILADRPQEQQLKGLQAPTQLLVVESFFEKTAKPAQNTGLQVFARSDNAAWIIYTSGSTGTPKGVVLEHGALATSILGHGKAYGLQSDDRILQFAAYTFDAAIQEIMTTLAFGACICIPSEQDRVERLTSYVAENRITMATLTSTVAALVRPRETPTVRTIILVGEAVQANVVDQWLQQAKVINGYGPSECSIASTCREIQNSSSALNIGTAIAGGLWVVKPSSTELAAFGSPGELLIDGPLLARGYLNDPTKTAASFITDTVFLKDLGLSGRRLYRTGDLVQQNRDGSLTYLGRIDTQIKIRGQRVEIGEIESQIEKHPTVRDAVVLYPRQGPLANRLVATVVLGETSTDSQSTAIQQISQEYQGYANTQFHELQRILSENLVYYMIPSVWVPLAAVPVNTSGKTDRLAISRWVQSLTEDEVSTLTSEETEYIDEELTTTIERQLRQIWSEVLDVPLHKITYTTTKFFSLGGDSITAMQVVSACRARGILVTVRKALDYQTIRELATQTQTTENSSSITKIPEGNFQLSPIQQMYFADIAADGIRADGEYRFNQGVTLHVTRQIDWEDLAQALDAIVSKHAMLRARFSHSQNGWHQWVEKHVPASYRLCKHTASDSRSMQDIIEHSQVSLDLEHGPVFAADLIHRPDMQKEDGQDGQVLHFVAHHLVIDLMSWRILLQDLETLLVYDQPLKMDILSFPTWLERQRQSLSKSLDNNIDPLPVTIPKADWEYWGLVPRQERSVDLVNIQTKCDSATTSILLSDAANSALKTEPVEILLAAFYHSFREHFSDRPVPPIFTEGHGREAMDGETNLTETVGWFTTLSPIYIPPSENNNKAIDVLRQLKDQRRRIPSRGMPYFASRFLTPEGRERYADHGPAEIVFNYLGRFQQLEREDALFRIDNGDDAISVAPVGNLVNISAVLDISATVHEGELCINIRFSPKTKHQKTLQRWAQSYSCAIESLVGELATVTPGATATDFPLARLSDNDMSLIENQYLTTMGVSSSQVQDILPCSPIQQGILLTQMQLPRAYLIYQTCRITSSNHNRPVAADRLIKAWKQVVARHSVLRTILMEPLPNQEKFVQIVLADPEIDVVCVDDVLDEDATQWFEAQSQLDPSDRRRPPHRLTTLATTSGEIYCRFDINHALVDASSMTLIIRDLIDAYGNGFTTGGSNYSSYIQFLQGKHQQDDLQYWKSALHNAEPCLLSPQDPTQSDAHGKILSVSKRIEDLTMLNIFRDTHGVSIASVCQLAWAVVLANWTNSQNISFGNLSSGRDAPIPDVQELVGPMINMLVCHLQVDWNANVSDVARKLQSQSAEAFEHQGVSLAAIQHELGLSRGQPLFNSILSYKRQVPTSSSTAEIIFEGLDSEDPTEYDINIHVVASPTDLEFDILYSNTLLSESAASRLADCLIQAVRAISENASRQLGQLNLLPAGDANQICKWNSDMAEPREACLHDLVIQQMAAHPTAQAVYAHDGELTYGDLDKFSRQLACYLVNQGVGPEVMIGLCMDKSKWSVVAILGILRAGGAVLPLGVSNPLARVEAILKDTAAPLAIVDEAQECRLGALEADIKLININSFVNAVPSAVEGLPVSEPCTSVQPNNIAWCQFTSGSTGTPKGVILEHGALATSIYSHSQRFGLRPGERLLQFAAFTFDATIYDIMAPLSFGGCTCIPSENDRMNRLGPFISEANVSFAFMTPAVVSLLQPKDVPSIKTLIVGGEIFTSKTIDQWIQHADVKEAYGPTECSIFSTCNDLLDSSQVRNIGMAVAARTWVINPFSNGQLVPISTPGELLIEGPLLSRGYLNDPEKTAGSFLVDPAFVKELGLSPGRRFYRTGDLVQQNSDGTLQYLDRIGTQVKINGQRLEIGEIESQILLLLPNAKYAYVCKQGSSLIGVIEATSSSRAAVVGSHSIITPNMEQQKSFEYIEASLRERLPSYMIPSTFLVINSFPLTDSGKLDRRRVVNLLDAIPSDKWLEYTARSQIYYAPVGRNEEILSELWAACINLEKKSVSRMDNFFELGGDSITAMSLVQRLAKLGLRIHVSEIFKDPVLCAMAARVTADIDENGEYERFSLVSSEERAQIVKENMSPARRQLNHFAFDATGPCDTSHLTSAIIQLVTKIESLRTGFAQTHKQKLLQVVYAKWEPAVRVFKTDKSPGAFYEETLERDMFIEPNLARPMFDVAIIITRTTQQVRIVFRMSHALYDGATLHQVWAALEAIMAGQTIGNFAPVGPYFQSLRAQTTNETEEYWGELVQGAAISSVSAGAEPRVSRLGIFSSKPIMLPRSRQFDFTLAVAVKAAWAIVLSHHVTSNDVVFADVLTGRTVVHPSVADVVACCARAVPCRVTCEPEWTAKTLLEQIKQQQVDSMAHEGLELQQIAQRFMGWSEEVESDAPDMRVSMVNHTKAQKQTMSLGSTVYERVTVDLSNSYASVDFAIESVEQEDGSLSLGMAYASDRISEQLARTLSNGFQAVLLEIIEDSGCNVSHLDDILRDLVVKQ</sequence>
<name>W4932_FUSPC</name>
<evidence type="ECO:0000250" key="1">
    <source>
        <dbReference type="UniProtKB" id="Q4WAZ9"/>
    </source>
</evidence>
<evidence type="ECO:0000255" key="2"/>
<evidence type="ECO:0000255" key="3">
    <source>
        <dbReference type="PROSITE-ProRule" id="PRU00258"/>
    </source>
</evidence>
<evidence type="ECO:0000256" key="4">
    <source>
        <dbReference type="SAM" id="MobiDB-lite"/>
    </source>
</evidence>
<evidence type="ECO:0000269" key="5">
    <source>
    </source>
</evidence>
<evidence type="ECO:0000303" key="6">
    <source>
    </source>
</evidence>
<evidence type="ECO:0000305" key="7"/>
<evidence type="ECO:0000305" key="8">
    <source>
    </source>
</evidence>
<protein>
    <recommendedName>
        <fullName evidence="6">Nonribosomal peptide synthetase 32</fullName>
        <shortName evidence="6">NRPS 32</shortName>
        <ecNumber evidence="8">6.3.2.-</ecNumber>
    </recommendedName>
    <alternativeName>
        <fullName evidence="6">W493 A and B biosynthesis cluster protein NRPS320</fullName>
    </alternativeName>
</protein>
<accession>K3VDP2</accession>
<feature type="chain" id="PRO_0000445375" description="Nonribosomal peptide synthetase 32">
    <location>
        <begin position="1"/>
        <end position="8892"/>
    </location>
</feature>
<feature type="domain" description="Carrier 1" evidence="3">
    <location>
        <begin position="12"/>
        <end position="85"/>
    </location>
</feature>
<feature type="domain" description="Carrier 2" evidence="3">
    <location>
        <begin position="1523"/>
        <end position="1599"/>
    </location>
</feature>
<feature type="domain" description="Carrier 3" evidence="3">
    <location>
        <begin position="3061"/>
        <end position="3137"/>
    </location>
</feature>
<feature type="domain" description="Carrier 4" evidence="3">
    <location>
        <begin position="4627"/>
        <end position="4703"/>
    </location>
</feature>
<feature type="domain" description="Carrier 5" evidence="3">
    <location>
        <begin position="5745"/>
        <end position="5821"/>
    </location>
</feature>
<feature type="domain" description="Carrier 6" evidence="3">
    <location>
        <begin position="6834"/>
        <end position="6911"/>
    </location>
</feature>
<feature type="domain" description="Carrier 7" evidence="3">
    <location>
        <begin position="8380"/>
        <end position="8456"/>
    </location>
</feature>
<feature type="region of interest" description="Disordered" evidence="4">
    <location>
        <begin position="88"/>
        <end position="112"/>
    </location>
</feature>
<feature type="region of interest" description="Condensation 1" evidence="2 8">
    <location>
        <begin position="567"/>
        <end position="956"/>
    </location>
</feature>
<feature type="region of interest" description="Adenylation 1" evidence="2 8">
    <location>
        <begin position="989"/>
        <end position="1386"/>
    </location>
</feature>
<feature type="region of interest" description="Epimerization 1" evidence="2 8">
    <location>
        <begin position="1609"/>
        <end position="2039"/>
    </location>
</feature>
<feature type="region of interest" description="Condensation 2" evidence="2 8">
    <location>
        <begin position="2083"/>
        <end position="2518"/>
    </location>
</feature>
<feature type="region of interest" description="Adenylation 2" evidence="2 8">
    <location>
        <begin position="2543"/>
        <end position="2934"/>
    </location>
</feature>
<feature type="region of interest" description="Epimerization 2" evidence="2 8">
    <location>
        <begin position="3153"/>
        <end position="3590"/>
    </location>
</feature>
<feature type="region of interest" description="Condensation 3" evidence="2 8">
    <location>
        <begin position="3634"/>
        <end position="4061"/>
    </location>
</feature>
<feature type="region of interest" description="Adenylation 3" evidence="2 8">
    <location>
        <begin position="4098"/>
        <end position="4488"/>
    </location>
</feature>
<feature type="region of interest" description="Condensation 4" evidence="2 8">
    <location>
        <begin position="4760"/>
        <end position="5181"/>
    </location>
</feature>
<feature type="region of interest" description="Adenylation 4" evidence="2 8">
    <location>
        <begin position="5205"/>
        <end position="5605"/>
    </location>
</feature>
<feature type="region of interest" description="Condensation 5" evidence="2 8">
    <location>
        <begin position="5868"/>
        <end position="6285"/>
    </location>
</feature>
<feature type="region of interest" description="Adenylation 5" evidence="2 8">
    <location>
        <begin position="6307"/>
        <end position="6700"/>
    </location>
</feature>
<feature type="region of interest" description="Epimerization 3" evidence="2 8">
    <location>
        <begin position="6923"/>
        <end position="7360"/>
    </location>
</feature>
<feature type="region of interest" description="Condensation 6" evidence="2 8">
    <location>
        <begin position="7403"/>
        <end position="7834"/>
    </location>
</feature>
<feature type="region of interest" description="Adenylation 6" evidence="2 8">
    <location>
        <begin position="7855"/>
        <end position="8253"/>
    </location>
</feature>
<feature type="region of interest" description="Condensation 7" evidence="2 8">
    <location>
        <begin position="8490"/>
        <end position="8878"/>
    </location>
</feature>
<feature type="compositionally biased region" description="Low complexity" evidence="4">
    <location>
        <begin position="93"/>
        <end position="108"/>
    </location>
</feature>
<feature type="modified residue" description="O-(pantetheine 4'-phosphoryl)serine" evidence="3">
    <location>
        <position position="46"/>
    </location>
</feature>
<feature type="modified residue" description="O-(pantetheine 4'-phosphoryl)serine" evidence="3">
    <location>
        <position position="1560"/>
    </location>
</feature>
<feature type="modified residue" description="O-(pantetheine 4'-phosphoryl)serine" evidence="3">
    <location>
        <position position="3098"/>
    </location>
</feature>
<feature type="modified residue" description="O-(pantetheine 4'-phosphoryl)serine" evidence="3">
    <location>
        <position position="4664"/>
    </location>
</feature>
<feature type="modified residue" description="O-(pantetheine 4'-phosphoryl)serine" evidence="3">
    <location>
        <position position="5782"/>
    </location>
</feature>
<feature type="modified residue" description="O-(pantetheine 4'-phosphoryl)serine" evidence="3">
    <location>
        <position position="6872"/>
    </location>
</feature>
<feature type="modified residue" description="O-(pantetheine 4'-phosphoryl)serine" evidence="3">
    <location>
        <position position="8417"/>
    </location>
</feature>